<comment type="function">
    <text evidence="1 2 3 7">Alpha-ionylideneethane synthase; part of the gene cluster that mediates the biosynthesis of abscisic acid (ABA), a phytohormone that acts antagonistically toward salicylic acid (SA), jasmonic acid (JA) and ethylene (ETH) signaling, to impede plant defense responses (PubMed:15240257, PubMed:16820452). The first step of the pathway catalyzes the reaction from farnesyl diphosphate to alpha-ionylideneethane performed by the alpha-ionylideneethane synthase aba3 via a three-step reaction mechanism involving 2 neutral intermediates, beta-farnesene and allofarnesene (PubMed:30226766). The cytochrome P450 monooxygenase aba1 might then be involved in the conversion of alpha-ionylideneethane to alpha-ionylideneacetic acid (Probable). Alpha-ionylideneacetic acid is further converted to abscisic acid in 2 steps involving the cytochrome P450 monooxygenase aba2 and the short-chain dehydrogenase/reductase aba4, via the intermediates 1'-deoxy-ABA or 1',4'-trans-diol-ABA, depending on the order of action of these 2 enzymes (Probable). Aba2 is responsible for the hydroxylation of carbon atom C-1' and aba4 might be involved in the oxidation of the C-4' carbon atom (PubMed:16820452).</text>
</comment>
<comment type="pathway">
    <text evidence="2">Hormone biosynthesis.</text>
</comment>
<comment type="induction">
    <text evidence="2">Expression is enhanced at 60 and 90 minutes after the addition of the ABA precursor mevalonic acid (MVA) to the medium, but declined after 120 min.</text>
</comment>
<comment type="disruption phenotype">
    <text evidence="2">Impairs the production of abscisic acid (ABA).</text>
</comment>
<comment type="similarity">
    <text evidence="6">Belongs to the alpha-ionylideneethane synthase family.</text>
</comment>
<dbReference type="EC" id="4.2.3.-" evidence="3"/>
<dbReference type="EMBL" id="CP009812">
    <property type="protein sequence ID" value="ATZ52743.1"/>
    <property type="molecule type" value="Genomic_DNA"/>
</dbReference>
<dbReference type="PDB" id="8ZAC">
    <property type="method" value="X-ray"/>
    <property type="resolution" value="2.45 A"/>
    <property type="chains" value="A/B=1-440"/>
</dbReference>
<dbReference type="PDBsum" id="8ZAC"/>
<dbReference type="SMR" id="A0A384JQC9"/>
<dbReference type="EnsemblFungi" id="Bcin08g03880.1">
    <property type="protein sequence ID" value="Bcin08p03880.1"/>
    <property type="gene ID" value="Bcin08g03880"/>
</dbReference>
<dbReference type="VEuPathDB" id="FungiDB:Bcin08g03880"/>
<dbReference type="OrthoDB" id="2821964at2759"/>
<dbReference type="Proteomes" id="UP000001798">
    <property type="component" value="Chromosome bcin08"/>
</dbReference>
<dbReference type="GO" id="GO:0016829">
    <property type="term" value="F:lyase activity"/>
    <property type="evidence" value="ECO:0007669"/>
    <property type="project" value="UniProtKB-KW"/>
</dbReference>
<dbReference type="GO" id="GO:0009688">
    <property type="term" value="P:abscisic acid biosynthetic process"/>
    <property type="evidence" value="ECO:0000314"/>
    <property type="project" value="GO_Central"/>
</dbReference>
<protein>
    <recommendedName>
        <fullName evidence="4">Alpha-ionylideneethane synthase aba3</fullName>
        <ecNumber evidence="3">4.2.3.-</ecNumber>
    </recommendedName>
    <alternativeName>
        <fullName evidence="4">Abscisic acid biosynthesis cluster protein 3</fullName>
    </alternativeName>
    <alternativeName>
        <fullName evidence="5">Sesquiterpene synthase aba3</fullName>
    </alternativeName>
</protein>
<proteinExistence type="evidence at protein level"/>
<gene>
    <name evidence="4" type="primary">aba3</name>
    <name type="ORF">BCIN_08g03880</name>
</gene>
<reference key="1">
    <citation type="journal article" date="2011" name="PLoS Genet.">
        <title>Genomic analysis of the necrotrophic fungal pathogens Sclerotinia sclerotiorum and Botrytis cinerea.</title>
        <authorList>
            <person name="Amselem J."/>
            <person name="Cuomo C.A."/>
            <person name="van Kan J.A.L."/>
            <person name="Viaud M."/>
            <person name="Benito E.P."/>
            <person name="Couloux A."/>
            <person name="Coutinho P.M."/>
            <person name="de Vries R.P."/>
            <person name="Dyer P.S."/>
            <person name="Fillinger S."/>
            <person name="Fournier E."/>
            <person name="Gout L."/>
            <person name="Hahn M."/>
            <person name="Kohn L."/>
            <person name="Lapalu N."/>
            <person name="Plummer K.M."/>
            <person name="Pradier J.-M."/>
            <person name="Quevillon E."/>
            <person name="Sharon A."/>
            <person name="Simon A."/>
            <person name="ten Have A."/>
            <person name="Tudzynski B."/>
            <person name="Tudzynski P."/>
            <person name="Wincker P."/>
            <person name="Andrew M."/>
            <person name="Anthouard V."/>
            <person name="Beever R.E."/>
            <person name="Beffa R."/>
            <person name="Benoit I."/>
            <person name="Bouzid O."/>
            <person name="Brault B."/>
            <person name="Chen Z."/>
            <person name="Choquer M."/>
            <person name="Collemare J."/>
            <person name="Cotton P."/>
            <person name="Danchin E.G."/>
            <person name="Da Silva C."/>
            <person name="Gautier A."/>
            <person name="Giraud C."/>
            <person name="Giraud T."/>
            <person name="Gonzalez C."/>
            <person name="Grossetete S."/>
            <person name="Gueldener U."/>
            <person name="Henrissat B."/>
            <person name="Howlett B.J."/>
            <person name="Kodira C."/>
            <person name="Kretschmer M."/>
            <person name="Lappartient A."/>
            <person name="Leroch M."/>
            <person name="Levis C."/>
            <person name="Mauceli E."/>
            <person name="Neuveglise C."/>
            <person name="Oeser B."/>
            <person name="Pearson M."/>
            <person name="Poulain J."/>
            <person name="Poussereau N."/>
            <person name="Quesneville H."/>
            <person name="Rascle C."/>
            <person name="Schumacher J."/>
            <person name="Segurens B."/>
            <person name="Sexton A."/>
            <person name="Silva E."/>
            <person name="Sirven C."/>
            <person name="Soanes D.M."/>
            <person name="Talbot N.J."/>
            <person name="Templeton M."/>
            <person name="Yandava C."/>
            <person name="Yarden O."/>
            <person name="Zeng Q."/>
            <person name="Rollins J.A."/>
            <person name="Lebrun M.-H."/>
            <person name="Dickman M."/>
        </authorList>
    </citation>
    <scope>NUCLEOTIDE SEQUENCE [LARGE SCALE GENOMIC DNA]</scope>
    <source>
        <strain>B05.10</strain>
    </source>
</reference>
<reference key="2">
    <citation type="journal article" date="2012" name="Eukaryot. Cell">
        <title>Genome update of Botrytis cinerea strains B05.10 and T4.</title>
        <authorList>
            <person name="Staats M."/>
            <person name="van Kan J.A.L."/>
        </authorList>
    </citation>
    <scope>NUCLEOTIDE SEQUENCE [LARGE SCALE GENOMIC DNA]</scope>
    <source>
        <strain>B05.10</strain>
    </source>
</reference>
<reference key="3">
    <citation type="journal article" date="2017" name="Mol. Plant Pathol.">
        <title>A gapless genome sequence of the fungus Botrytis cinerea.</title>
        <authorList>
            <person name="van Kan J.A.L."/>
            <person name="Stassen J.H.M."/>
            <person name="Mosbach A."/>
            <person name="van der Lee T.A.J."/>
            <person name="Faino L."/>
            <person name="Farmer A.D."/>
            <person name="Papasotiriou D.G."/>
            <person name="Zhou S."/>
            <person name="Seidl M.F."/>
            <person name="Cottam E."/>
            <person name="Edel D."/>
            <person name="Hahn M."/>
            <person name="Schwartz D.C."/>
            <person name="Dietrich R.A."/>
            <person name="Widdison S."/>
            <person name="Scalliet G."/>
        </authorList>
    </citation>
    <scope>NUCLEOTIDE SEQUENCE [LARGE SCALE GENOMIC DNA]</scope>
    <source>
        <strain>B05.10</strain>
    </source>
</reference>
<reference key="4">
    <citation type="journal article" date="2004" name="Appl. Environ. Microbiol.">
        <title>The P450 monooxygenase BcABA1 is essential for abscisic acid biosynthesis in Botrytis cinerea.</title>
        <authorList>
            <person name="Siewers V."/>
            <person name="Smedsgaard J."/>
            <person name="Tudzynski P."/>
        </authorList>
    </citation>
    <scope>FUNCTION</scope>
</reference>
<reference key="5">
    <citation type="journal article" date="2006" name="Appl. Environ. Microbiol.">
        <title>Identification of an abscisic acid gene cluster in the grey mold Botrytis cinerea.</title>
        <authorList>
            <person name="Siewers V."/>
            <person name="Kokkelink L."/>
            <person name="Smedsgaard J."/>
            <person name="Tudzynski P."/>
        </authorList>
    </citation>
    <scope>INDUCTION</scope>
    <scope>FUNCTION</scope>
    <scope>DISRUPTION PHENOTYPE</scope>
    <scope>PATHWAY</scope>
</reference>
<reference key="6">
    <citation type="journal article" date="2018" name="J. Am. Chem. Soc.">
        <title>Unveiling biosynthesis of the phytohormone abscisic acid in fungi: unprecedented mechanism of core scaffold formation catalyzed by an unusual sesquiterpene synthase.</title>
        <authorList>
            <person name="Takino J."/>
            <person name="Kozaki T."/>
            <person name="Sato Y."/>
            <person name="Liu C."/>
            <person name="Ozaki T."/>
            <person name="Minami A."/>
            <person name="Oikawa H."/>
        </authorList>
    </citation>
    <scope>FUNCTION</scope>
    <scope>CATALYTIC ACTIVITY</scope>
    <scope>PATHWAY</scope>
</reference>
<organism>
    <name type="scientific">Botryotinia fuckeliana (strain B05.10)</name>
    <name type="common">Noble rot fungus</name>
    <name type="synonym">Botrytis cinerea</name>
    <dbReference type="NCBI Taxonomy" id="332648"/>
    <lineage>
        <taxon>Eukaryota</taxon>
        <taxon>Fungi</taxon>
        <taxon>Dikarya</taxon>
        <taxon>Ascomycota</taxon>
        <taxon>Pezizomycotina</taxon>
        <taxon>Leotiomycetes</taxon>
        <taxon>Helotiales</taxon>
        <taxon>Sclerotiniaceae</taxon>
        <taxon>Botrytis</taxon>
    </lineage>
</organism>
<keyword id="KW-0002">3D-structure</keyword>
<keyword id="KW-0456">Lyase</keyword>
<keyword id="KW-1185">Reference proteome</keyword>
<keyword id="KW-0843">Virulence</keyword>
<accession>A0A384JQC9</accession>
<evidence type="ECO:0000269" key="1">
    <source>
    </source>
</evidence>
<evidence type="ECO:0000269" key="2">
    <source>
    </source>
</evidence>
<evidence type="ECO:0000269" key="3">
    <source>
    </source>
</evidence>
<evidence type="ECO:0000303" key="4">
    <source>
    </source>
</evidence>
<evidence type="ECO:0000303" key="5">
    <source>
    </source>
</evidence>
<evidence type="ECO:0000305" key="6"/>
<evidence type="ECO:0000305" key="7">
    <source>
    </source>
</evidence>
<evidence type="ECO:0007829" key="8">
    <source>
        <dbReference type="PDB" id="8ZAC"/>
    </source>
</evidence>
<feature type="chain" id="PRO_0000448433" description="Alpha-ionylideneethane synthase aba3">
    <location>
        <begin position="1"/>
        <end position="440"/>
    </location>
</feature>
<feature type="helix" evidence="8">
    <location>
        <begin position="70"/>
        <end position="72"/>
    </location>
</feature>
<feature type="turn" evidence="8">
    <location>
        <begin position="73"/>
        <end position="76"/>
    </location>
</feature>
<feature type="strand" evidence="8">
    <location>
        <begin position="77"/>
        <end position="79"/>
    </location>
</feature>
<feature type="helix" evidence="8">
    <location>
        <begin position="83"/>
        <end position="100"/>
    </location>
</feature>
<feature type="helix" evidence="8">
    <location>
        <begin position="107"/>
        <end position="125"/>
    </location>
</feature>
<feature type="helix" evidence="8">
    <location>
        <begin position="127"/>
        <end position="129"/>
    </location>
</feature>
<feature type="turn" evidence="8">
    <location>
        <begin position="132"/>
        <end position="134"/>
    </location>
</feature>
<feature type="strand" evidence="8">
    <location>
        <begin position="136"/>
        <end position="138"/>
    </location>
</feature>
<feature type="helix" evidence="8">
    <location>
        <begin position="143"/>
        <end position="151"/>
    </location>
</feature>
<feature type="helix" evidence="8">
    <location>
        <begin position="157"/>
        <end position="174"/>
    </location>
</feature>
<feature type="helix" evidence="8">
    <location>
        <begin position="177"/>
        <end position="180"/>
    </location>
</feature>
<feature type="helix" evidence="8">
    <location>
        <begin position="182"/>
        <end position="191"/>
    </location>
</feature>
<feature type="helix" evidence="8">
    <location>
        <begin position="195"/>
        <end position="205"/>
    </location>
</feature>
<feature type="helix" evidence="8">
    <location>
        <begin position="208"/>
        <end position="217"/>
    </location>
</feature>
<feature type="turn" evidence="8">
    <location>
        <begin position="218"/>
        <end position="220"/>
    </location>
</feature>
<feature type="helix" evidence="8">
    <location>
        <begin position="228"/>
        <end position="245"/>
    </location>
</feature>
<feature type="helix" evidence="8">
    <location>
        <begin position="247"/>
        <end position="252"/>
    </location>
</feature>
<feature type="helix" evidence="8">
    <location>
        <begin position="259"/>
        <end position="261"/>
    </location>
</feature>
<feature type="turn" evidence="8">
    <location>
        <begin position="265"/>
        <end position="267"/>
    </location>
</feature>
<feature type="helix" evidence="8">
    <location>
        <begin position="268"/>
        <end position="285"/>
    </location>
</feature>
<feature type="turn" evidence="8">
    <location>
        <begin position="286"/>
        <end position="288"/>
    </location>
</feature>
<feature type="turn" evidence="8">
    <location>
        <begin position="290"/>
        <end position="292"/>
    </location>
</feature>
<feature type="helix" evidence="8">
    <location>
        <begin position="293"/>
        <end position="302"/>
    </location>
</feature>
<feature type="turn" evidence="8">
    <location>
        <begin position="303"/>
        <end position="305"/>
    </location>
</feature>
<feature type="helix" evidence="8">
    <location>
        <begin position="306"/>
        <end position="309"/>
    </location>
</feature>
<feature type="turn" evidence="8">
    <location>
        <begin position="315"/>
        <end position="319"/>
    </location>
</feature>
<feature type="helix" evidence="8">
    <location>
        <begin position="340"/>
        <end position="348"/>
    </location>
</feature>
<feature type="helix" evidence="8">
    <location>
        <begin position="355"/>
        <end position="361"/>
    </location>
</feature>
<feature type="helix" evidence="8">
    <location>
        <begin position="364"/>
        <end position="367"/>
    </location>
</feature>
<feature type="helix" evidence="8">
    <location>
        <begin position="372"/>
        <end position="379"/>
    </location>
</feature>
<feature type="strand" evidence="8">
    <location>
        <begin position="385"/>
        <end position="388"/>
    </location>
</feature>
<feature type="helix" evidence="8">
    <location>
        <begin position="408"/>
        <end position="419"/>
    </location>
</feature>
<feature type="helix" evidence="8">
    <location>
        <begin position="421"/>
        <end position="428"/>
    </location>
</feature>
<feature type="turn" evidence="8">
    <location>
        <begin position="430"/>
        <end position="433"/>
    </location>
</feature>
<sequence length="440" mass="50777">MQQVITQTLVDDRFIQISDSKKSEGLATDSTKRQSQEQPIHDKDPIKAATAAMAATPLVKEHQDTWYYPPDIANDLQSINLPAELKGEIFACAWEYTRCVIPNYTNWNRYVAFMRIIIMGIIAEFRGEMVDVTASNNLLGYDLDATLAALFEGTPGHKEMAREYKTFLLITADKASERRDGELFRRYVNALAQSPRHWFRMRDCDALARFTIASALACNDLDDIWFTEDQFEILTEIGDTLYDAVAFYKHRAEGETNSTFAYMPEDLRIKAYSECREILWALDAAWARNPKLANVINFVRFFGGPIHMMMRRYRFVEENLTIGKSETDKVVDQTRKNFKLWNRVDANKRSVLNTQRYKALIARSEELMFPGLAEFLEMGGDGICDKCKYRESYGAELSHQFGGVELCSECRLSWRKYLECFVERATKVFPELKTHFEVPV</sequence>
<name>ABA3_BOTFB</name>